<dbReference type="EMBL" id="CP000901">
    <property type="protein sequence ID" value="ABX88389.1"/>
    <property type="molecule type" value="Genomic_DNA"/>
</dbReference>
<dbReference type="RefSeq" id="WP_002211236.1">
    <property type="nucleotide sequence ID" value="NZ_CP009935.1"/>
</dbReference>
<dbReference type="SMR" id="A9QZ08"/>
<dbReference type="GeneID" id="57976644"/>
<dbReference type="KEGG" id="ypg:YpAngola_A2460"/>
<dbReference type="PATRIC" id="fig|349746.12.peg.3478"/>
<dbReference type="GO" id="GO:0005737">
    <property type="term" value="C:cytoplasm"/>
    <property type="evidence" value="ECO:0007669"/>
    <property type="project" value="UniProtKB-SubCell"/>
</dbReference>
<dbReference type="GO" id="GO:0016149">
    <property type="term" value="F:translation release factor activity, codon specific"/>
    <property type="evidence" value="ECO:0007669"/>
    <property type="project" value="UniProtKB-UniRule"/>
</dbReference>
<dbReference type="FunFam" id="3.30.160.20:FF:000004">
    <property type="entry name" value="Peptide chain release factor 1"/>
    <property type="match status" value="1"/>
</dbReference>
<dbReference type="FunFam" id="3.30.70.1660:FF:000002">
    <property type="entry name" value="Peptide chain release factor 1"/>
    <property type="match status" value="1"/>
</dbReference>
<dbReference type="FunFam" id="3.30.70.1660:FF:000004">
    <property type="entry name" value="Peptide chain release factor 1"/>
    <property type="match status" value="1"/>
</dbReference>
<dbReference type="Gene3D" id="3.30.160.20">
    <property type="match status" value="1"/>
</dbReference>
<dbReference type="Gene3D" id="3.30.70.1660">
    <property type="match status" value="1"/>
</dbReference>
<dbReference type="Gene3D" id="6.10.140.1950">
    <property type="match status" value="1"/>
</dbReference>
<dbReference type="HAMAP" id="MF_00093">
    <property type="entry name" value="Rel_fac_1"/>
    <property type="match status" value="1"/>
</dbReference>
<dbReference type="InterPro" id="IPR005139">
    <property type="entry name" value="PCRF"/>
</dbReference>
<dbReference type="InterPro" id="IPR000352">
    <property type="entry name" value="Pep_chain_release_fac_I"/>
</dbReference>
<dbReference type="InterPro" id="IPR045853">
    <property type="entry name" value="Pep_chain_release_fac_I_sf"/>
</dbReference>
<dbReference type="InterPro" id="IPR050057">
    <property type="entry name" value="Prokaryotic/Mito_RF"/>
</dbReference>
<dbReference type="InterPro" id="IPR004373">
    <property type="entry name" value="RF-1"/>
</dbReference>
<dbReference type="NCBIfam" id="TIGR00019">
    <property type="entry name" value="prfA"/>
    <property type="match status" value="1"/>
</dbReference>
<dbReference type="NCBIfam" id="NF001859">
    <property type="entry name" value="PRK00591.1"/>
    <property type="match status" value="1"/>
</dbReference>
<dbReference type="PANTHER" id="PTHR43804">
    <property type="entry name" value="LD18447P"/>
    <property type="match status" value="1"/>
</dbReference>
<dbReference type="PANTHER" id="PTHR43804:SF7">
    <property type="entry name" value="LD18447P"/>
    <property type="match status" value="1"/>
</dbReference>
<dbReference type="Pfam" id="PF03462">
    <property type="entry name" value="PCRF"/>
    <property type="match status" value="1"/>
</dbReference>
<dbReference type="Pfam" id="PF00472">
    <property type="entry name" value="RF-1"/>
    <property type="match status" value="1"/>
</dbReference>
<dbReference type="SMART" id="SM00937">
    <property type="entry name" value="PCRF"/>
    <property type="match status" value="1"/>
</dbReference>
<dbReference type="SUPFAM" id="SSF75620">
    <property type="entry name" value="Release factor"/>
    <property type="match status" value="1"/>
</dbReference>
<dbReference type="PROSITE" id="PS00745">
    <property type="entry name" value="RF_PROK_I"/>
    <property type="match status" value="1"/>
</dbReference>
<reference key="1">
    <citation type="journal article" date="2010" name="J. Bacteriol.">
        <title>Genome sequence of the deep-rooted Yersinia pestis strain Angola reveals new insights into the evolution and pangenome of the plague bacterium.</title>
        <authorList>
            <person name="Eppinger M."/>
            <person name="Worsham P.L."/>
            <person name="Nikolich M.P."/>
            <person name="Riley D.R."/>
            <person name="Sebastian Y."/>
            <person name="Mou S."/>
            <person name="Achtman M."/>
            <person name="Lindler L.E."/>
            <person name="Ravel J."/>
        </authorList>
    </citation>
    <scope>NUCLEOTIDE SEQUENCE [LARGE SCALE GENOMIC DNA]</scope>
    <source>
        <strain>Angola</strain>
    </source>
</reference>
<name>RF1_YERPG</name>
<feature type="chain" id="PRO_1000093529" description="Peptide chain release factor 1">
    <location>
        <begin position="1"/>
        <end position="360"/>
    </location>
</feature>
<feature type="region of interest" description="Disordered" evidence="2">
    <location>
        <begin position="291"/>
        <end position="312"/>
    </location>
</feature>
<feature type="compositionally biased region" description="Basic and acidic residues" evidence="2">
    <location>
        <begin position="291"/>
        <end position="308"/>
    </location>
</feature>
<feature type="modified residue" description="N5-methylglutamine" evidence="1">
    <location>
        <position position="235"/>
    </location>
</feature>
<accession>A9QZ08</accession>
<sequence>MKSSIVAKLEALQERHEEVLAYLGDASVIADQDRFRALSREYAQLTDVTRCFKEWRSAQDDIEAAEMMLDDLEMREMAQEELKIAKARSEELEQQLQVLLLPKDPDDERDCFLEIRAGTGGDEAAIFAGDMFRMYSRYAETRRWKVEIMSASEGEHGGYKEIIAKISGDGVFGQLKFESGGHRVQRVPETESQGRIHTSACTVAVMPAIPEAELPEINAGDLRIDTFRSSGAGGQHVNTTDSAIRITHIPTGIVVECQDERSQHKNKAKAMSVLGARIRAAEMQKRQLAEASERRNLLGTGDRSDRNRTYNFPQGRVTDHRINLTLYRLDEVMEGKLDMLIQPIVQEYQADQLSALSEQD</sequence>
<proteinExistence type="inferred from homology"/>
<gene>
    <name evidence="1" type="primary">prfA</name>
    <name type="ordered locus">YpAngola_A2460</name>
</gene>
<organism>
    <name type="scientific">Yersinia pestis bv. Antiqua (strain Angola)</name>
    <dbReference type="NCBI Taxonomy" id="349746"/>
    <lineage>
        <taxon>Bacteria</taxon>
        <taxon>Pseudomonadati</taxon>
        <taxon>Pseudomonadota</taxon>
        <taxon>Gammaproteobacteria</taxon>
        <taxon>Enterobacterales</taxon>
        <taxon>Yersiniaceae</taxon>
        <taxon>Yersinia</taxon>
    </lineage>
</organism>
<keyword id="KW-0963">Cytoplasm</keyword>
<keyword id="KW-0488">Methylation</keyword>
<keyword id="KW-0648">Protein biosynthesis</keyword>
<protein>
    <recommendedName>
        <fullName evidence="1">Peptide chain release factor 1</fullName>
        <shortName evidence="1">RF-1</shortName>
    </recommendedName>
</protein>
<evidence type="ECO:0000255" key="1">
    <source>
        <dbReference type="HAMAP-Rule" id="MF_00093"/>
    </source>
</evidence>
<evidence type="ECO:0000256" key="2">
    <source>
        <dbReference type="SAM" id="MobiDB-lite"/>
    </source>
</evidence>
<comment type="function">
    <text evidence="1">Peptide chain release factor 1 directs the termination of translation in response to the peptide chain termination codons UAG and UAA.</text>
</comment>
<comment type="subcellular location">
    <subcellularLocation>
        <location evidence="1">Cytoplasm</location>
    </subcellularLocation>
</comment>
<comment type="PTM">
    <text evidence="1">Methylated by PrmC. Methylation increases the termination efficiency of RF1.</text>
</comment>
<comment type="similarity">
    <text evidence="1">Belongs to the prokaryotic/mitochondrial release factor family.</text>
</comment>